<evidence type="ECO:0000250" key="1"/>
<evidence type="ECO:0000305" key="2"/>
<geneLocation type="chloroplast"/>
<gene>
    <name type="primary">rpl23-A</name>
</gene>
<gene>
    <name type="primary">rpl23-B</name>
</gene>
<name>RK23_CITSI</name>
<feature type="chain" id="PRO_0000272892" description="Large ribosomal subunit protein uL23cz/uL23cy">
    <location>
        <begin position="1"/>
        <end position="93"/>
    </location>
</feature>
<organism>
    <name type="scientific">Citrus sinensis</name>
    <name type="common">Sweet orange</name>
    <name type="synonym">Citrus aurantium var. sinensis</name>
    <dbReference type="NCBI Taxonomy" id="2711"/>
    <lineage>
        <taxon>Eukaryota</taxon>
        <taxon>Viridiplantae</taxon>
        <taxon>Streptophyta</taxon>
        <taxon>Embryophyta</taxon>
        <taxon>Tracheophyta</taxon>
        <taxon>Spermatophyta</taxon>
        <taxon>Magnoliopsida</taxon>
        <taxon>eudicotyledons</taxon>
        <taxon>Gunneridae</taxon>
        <taxon>Pentapetalae</taxon>
        <taxon>rosids</taxon>
        <taxon>malvids</taxon>
        <taxon>Sapindales</taxon>
        <taxon>Rutaceae</taxon>
        <taxon>Aurantioideae</taxon>
        <taxon>Citrus</taxon>
    </lineage>
</organism>
<accession>Q09MB3</accession>
<comment type="function">
    <text evidence="1">Binds to 23S rRNA.</text>
</comment>
<comment type="subunit">
    <text evidence="1">Part of the 50S ribosomal subunit.</text>
</comment>
<comment type="subcellular location">
    <subcellularLocation>
        <location>Plastid</location>
        <location>Chloroplast</location>
    </subcellularLocation>
</comment>
<comment type="similarity">
    <text evidence="2">Belongs to the universal ribosomal protein uL23 family.</text>
</comment>
<reference key="1">
    <citation type="journal article" date="2006" name="BMC Plant Biol.">
        <title>The complete chloroplast genome sequence of Citrus sinensis (L.) Osbeck var 'Ridge Pineapple': organization and phylogenetic relationships to other angiosperms.</title>
        <authorList>
            <person name="Bausher M.G."/>
            <person name="Singh N.D."/>
            <person name="Lee S.-B."/>
            <person name="Jansen R.K."/>
            <person name="Daniell H."/>
        </authorList>
    </citation>
    <scope>NUCLEOTIDE SEQUENCE [LARGE SCALE GENOMIC DNA]</scope>
    <source>
        <strain>cv. Osbeck var. Ridge Pineapple</strain>
    </source>
</reference>
<keyword id="KW-0150">Chloroplast</keyword>
<keyword id="KW-0934">Plastid</keyword>
<keyword id="KW-0687">Ribonucleoprotein</keyword>
<keyword id="KW-0689">Ribosomal protein</keyword>
<keyword id="KW-0694">RNA-binding</keyword>
<keyword id="KW-0699">rRNA-binding</keyword>
<sequence>MDGIKYAVFTDKSIRLLGKNQYTSNVESGSTRTEIKHWVELFFGVKVIAMNSHQLPRKGRRMGPIMAHTMHYRRMIITLQPGYSIPPLRKKRT</sequence>
<proteinExistence type="inferred from homology"/>
<protein>
    <recommendedName>
        <fullName evidence="2">Large ribosomal subunit protein uL23cz/uL23cy</fullName>
    </recommendedName>
    <alternativeName>
        <fullName>50S ribosomal protein L23, chloroplastic</fullName>
    </alternativeName>
</protein>
<dbReference type="EMBL" id="DQ864733">
    <property type="protein sequence ID" value="ABI49061.1"/>
    <property type="molecule type" value="Genomic_DNA"/>
</dbReference>
<dbReference type="EMBL" id="DQ864733">
    <property type="protein sequence ID" value="ABI49085.1"/>
    <property type="molecule type" value="Genomic_DNA"/>
</dbReference>
<dbReference type="SMR" id="Q09MB3"/>
<dbReference type="KEGG" id="cit:4271194"/>
<dbReference type="KEGG" id="cit:4271223"/>
<dbReference type="OrthoDB" id="174976at71240"/>
<dbReference type="GO" id="GO:0009507">
    <property type="term" value="C:chloroplast"/>
    <property type="evidence" value="ECO:0007669"/>
    <property type="project" value="UniProtKB-SubCell"/>
</dbReference>
<dbReference type="GO" id="GO:1990904">
    <property type="term" value="C:ribonucleoprotein complex"/>
    <property type="evidence" value="ECO:0007669"/>
    <property type="project" value="UniProtKB-KW"/>
</dbReference>
<dbReference type="GO" id="GO:0005840">
    <property type="term" value="C:ribosome"/>
    <property type="evidence" value="ECO:0007669"/>
    <property type="project" value="UniProtKB-KW"/>
</dbReference>
<dbReference type="GO" id="GO:0003729">
    <property type="term" value="F:mRNA binding"/>
    <property type="evidence" value="ECO:0007669"/>
    <property type="project" value="UniProtKB-ARBA"/>
</dbReference>
<dbReference type="GO" id="GO:0019843">
    <property type="term" value="F:rRNA binding"/>
    <property type="evidence" value="ECO:0007669"/>
    <property type="project" value="UniProtKB-UniRule"/>
</dbReference>
<dbReference type="GO" id="GO:0003735">
    <property type="term" value="F:structural constituent of ribosome"/>
    <property type="evidence" value="ECO:0007669"/>
    <property type="project" value="InterPro"/>
</dbReference>
<dbReference type="GO" id="GO:0006412">
    <property type="term" value="P:translation"/>
    <property type="evidence" value="ECO:0007669"/>
    <property type="project" value="UniProtKB-UniRule"/>
</dbReference>
<dbReference type="FunFam" id="3.30.70.330:FF:000002">
    <property type="entry name" value="50S ribosomal protein L23, chloroplastic"/>
    <property type="match status" value="1"/>
</dbReference>
<dbReference type="Gene3D" id="3.30.70.330">
    <property type="match status" value="1"/>
</dbReference>
<dbReference type="HAMAP" id="MF_01369_B">
    <property type="entry name" value="Ribosomal_uL23_B"/>
    <property type="match status" value="1"/>
</dbReference>
<dbReference type="InterPro" id="IPR012677">
    <property type="entry name" value="Nucleotide-bd_a/b_plait_sf"/>
</dbReference>
<dbReference type="InterPro" id="IPR013025">
    <property type="entry name" value="Ribosomal_uL23-like"/>
</dbReference>
<dbReference type="InterPro" id="IPR012678">
    <property type="entry name" value="Ribosomal_uL23/eL15/eS24_sf"/>
</dbReference>
<dbReference type="InterPro" id="IPR001014">
    <property type="entry name" value="Ribosomal_uL23_CS"/>
</dbReference>
<dbReference type="PANTHER" id="PTHR11620">
    <property type="entry name" value="60S RIBOSOMAL PROTEIN L23A"/>
    <property type="match status" value="1"/>
</dbReference>
<dbReference type="Pfam" id="PF00276">
    <property type="entry name" value="Ribosomal_L23"/>
    <property type="match status" value="1"/>
</dbReference>
<dbReference type="SUPFAM" id="SSF54189">
    <property type="entry name" value="Ribosomal proteins S24e, L23 and L15e"/>
    <property type="match status" value="1"/>
</dbReference>
<dbReference type="PROSITE" id="PS00050">
    <property type="entry name" value="RIBOSOMAL_L23"/>
    <property type="match status" value="1"/>
</dbReference>